<feature type="chain" id="PRO_0000223760" description="Acetyl-coenzyme A carboxylase carboxyl transferase subunit alpha">
    <location>
        <begin position="1"/>
        <end position="274"/>
    </location>
</feature>
<feature type="domain" description="CoA carboxyltransferase C-terminal" evidence="2">
    <location>
        <begin position="1"/>
        <end position="245"/>
    </location>
</feature>
<proteinExistence type="inferred from homology"/>
<reference key="1">
    <citation type="journal article" date="2001" name="J. Bacteriol.">
        <title>Genome sequence and comparative analysis of the solvent-producing bacterium Clostridium acetobutylicum.</title>
        <authorList>
            <person name="Noelling J."/>
            <person name="Breton G."/>
            <person name="Omelchenko M.V."/>
            <person name="Makarova K.S."/>
            <person name="Zeng Q."/>
            <person name="Gibson R."/>
            <person name="Lee H.M."/>
            <person name="Dubois J."/>
            <person name="Qiu D."/>
            <person name="Hitti J."/>
            <person name="Wolf Y.I."/>
            <person name="Tatusov R.L."/>
            <person name="Sabathe F."/>
            <person name="Doucette-Stamm L.A."/>
            <person name="Soucaille P."/>
            <person name="Daly M.J."/>
            <person name="Bennett G.N."/>
            <person name="Koonin E.V."/>
            <person name="Smith D.R."/>
        </authorList>
    </citation>
    <scope>NUCLEOTIDE SEQUENCE [LARGE SCALE GENOMIC DNA]</scope>
    <source>
        <strain>ATCC 824 / DSM 792 / JCM 1419 / IAM 19013 / LMG 5710 / NBRC 13948 / NRRL B-527 / VKM B-1787 / 2291 / W</strain>
    </source>
</reference>
<accession>Q97DB2</accession>
<dbReference type="EC" id="2.1.3.15" evidence="1"/>
<dbReference type="EMBL" id="AE001437">
    <property type="protein sequence ID" value="AAK81491.1"/>
    <property type="molecule type" value="Genomic_DNA"/>
</dbReference>
<dbReference type="PIR" id="H97337">
    <property type="entry name" value="H97337"/>
</dbReference>
<dbReference type="RefSeq" id="NP_350151.1">
    <property type="nucleotide sequence ID" value="NC_003030.1"/>
</dbReference>
<dbReference type="RefSeq" id="WP_010966831.1">
    <property type="nucleotide sequence ID" value="NC_003030.1"/>
</dbReference>
<dbReference type="SMR" id="Q97DB2"/>
<dbReference type="STRING" id="272562.CA_C3568"/>
<dbReference type="DNASU" id="1119750"/>
<dbReference type="KEGG" id="cac:CA_C3568"/>
<dbReference type="PATRIC" id="fig|272562.8.peg.3757"/>
<dbReference type="eggNOG" id="COG0825">
    <property type="taxonomic scope" value="Bacteria"/>
</dbReference>
<dbReference type="HOGENOM" id="CLU_015486_0_2_9"/>
<dbReference type="OrthoDB" id="9808023at2"/>
<dbReference type="UniPathway" id="UPA00655">
    <property type="reaction ID" value="UER00711"/>
</dbReference>
<dbReference type="Proteomes" id="UP000000814">
    <property type="component" value="Chromosome"/>
</dbReference>
<dbReference type="GO" id="GO:0009317">
    <property type="term" value="C:acetyl-CoA carboxylase complex"/>
    <property type="evidence" value="ECO:0007669"/>
    <property type="project" value="InterPro"/>
</dbReference>
<dbReference type="GO" id="GO:0003989">
    <property type="term" value="F:acetyl-CoA carboxylase activity"/>
    <property type="evidence" value="ECO:0007669"/>
    <property type="project" value="InterPro"/>
</dbReference>
<dbReference type="GO" id="GO:0005524">
    <property type="term" value="F:ATP binding"/>
    <property type="evidence" value="ECO:0007669"/>
    <property type="project" value="UniProtKB-KW"/>
</dbReference>
<dbReference type="GO" id="GO:0016743">
    <property type="term" value="F:carboxyl- or carbamoyltransferase activity"/>
    <property type="evidence" value="ECO:0007669"/>
    <property type="project" value="UniProtKB-UniRule"/>
</dbReference>
<dbReference type="GO" id="GO:0006633">
    <property type="term" value="P:fatty acid biosynthetic process"/>
    <property type="evidence" value="ECO:0007669"/>
    <property type="project" value="UniProtKB-KW"/>
</dbReference>
<dbReference type="GO" id="GO:2001295">
    <property type="term" value="P:malonyl-CoA biosynthetic process"/>
    <property type="evidence" value="ECO:0007669"/>
    <property type="project" value="UniProtKB-UniRule"/>
</dbReference>
<dbReference type="Gene3D" id="3.90.226.10">
    <property type="entry name" value="2-enoyl-CoA Hydratase, Chain A, domain 1"/>
    <property type="match status" value="1"/>
</dbReference>
<dbReference type="HAMAP" id="MF_00823">
    <property type="entry name" value="AcetylCoA_CT_alpha"/>
    <property type="match status" value="1"/>
</dbReference>
<dbReference type="InterPro" id="IPR001095">
    <property type="entry name" value="Acetyl_CoA_COase_a_su"/>
</dbReference>
<dbReference type="InterPro" id="IPR029045">
    <property type="entry name" value="ClpP/crotonase-like_dom_sf"/>
</dbReference>
<dbReference type="InterPro" id="IPR011763">
    <property type="entry name" value="COA_CT_C"/>
</dbReference>
<dbReference type="NCBIfam" id="TIGR00513">
    <property type="entry name" value="accA"/>
    <property type="match status" value="1"/>
</dbReference>
<dbReference type="NCBIfam" id="NF041504">
    <property type="entry name" value="AccA_sub"/>
    <property type="match status" value="1"/>
</dbReference>
<dbReference type="NCBIfam" id="NF004344">
    <property type="entry name" value="PRK05724.1"/>
    <property type="match status" value="1"/>
</dbReference>
<dbReference type="PANTHER" id="PTHR42853">
    <property type="entry name" value="ACETYL-COENZYME A CARBOXYLASE CARBOXYL TRANSFERASE SUBUNIT ALPHA"/>
    <property type="match status" value="1"/>
</dbReference>
<dbReference type="PANTHER" id="PTHR42853:SF3">
    <property type="entry name" value="ACETYL-COENZYME A CARBOXYLASE CARBOXYL TRANSFERASE SUBUNIT ALPHA, CHLOROPLASTIC"/>
    <property type="match status" value="1"/>
</dbReference>
<dbReference type="Pfam" id="PF03255">
    <property type="entry name" value="ACCA"/>
    <property type="match status" value="1"/>
</dbReference>
<dbReference type="PRINTS" id="PR01069">
    <property type="entry name" value="ACCCTRFRASEA"/>
</dbReference>
<dbReference type="SUPFAM" id="SSF52096">
    <property type="entry name" value="ClpP/crotonase"/>
    <property type="match status" value="1"/>
</dbReference>
<dbReference type="PROSITE" id="PS50989">
    <property type="entry name" value="COA_CT_CTER"/>
    <property type="match status" value="1"/>
</dbReference>
<evidence type="ECO:0000255" key="1">
    <source>
        <dbReference type="HAMAP-Rule" id="MF_00823"/>
    </source>
</evidence>
<evidence type="ECO:0000255" key="2">
    <source>
        <dbReference type="PROSITE-ProRule" id="PRU01137"/>
    </source>
</evidence>
<protein>
    <recommendedName>
        <fullName evidence="1">Acetyl-coenzyme A carboxylase carboxyl transferase subunit alpha</fullName>
        <shortName evidence="1">ACCase subunit alpha</shortName>
        <shortName evidence="1">Acetyl-CoA carboxylase carboxyltransferase subunit alpha</shortName>
        <ecNumber evidence="1">2.1.3.15</ecNumber>
    </recommendedName>
</protein>
<gene>
    <name evidence="1" type="primary">accA</name>
    <name type="ordered locus">CA_C3568</name>
</gene>
<keyword id="KW-0067">ATP-binding</keyword>
<keyword id="KW-0963">Cytoplasm</keyword>
<keyword id="KW-0275">Fatty acid biosynthesis</keyword>
<keyword id="KW-0276">Fatty acid metabolism</keyword>
<keyword id="KW-0444">Lipid biosynthesis</keyword>
<keyword id="KW-0443">Lipid metabolism</keyword>
<keyword id="KW-0547">Nucleotide-binding</keyword>
<keyword id="KW-1185">Reference proteome</keyword>
<keyword id="KW-0808">Transferase</keyword>
<sequence length="274" mass="30149">MENSQELTPWQRLTIARMLERPTSLEYIDLIFDSFMEFHGDRAFGDDAAIVGGVAEFNGMPVTVIGQQKGRNTNENIKRNFGMPSPEGYRKALRLMKQAEKFNRPLICFVDTSGAYCGVEAEQRGQGEAIAKNLISMANLKIPVISVVIGEGGSGGALAMAVADEVWMLENSVYSLLSPEGFASILWKDSSRAKEAAEVMKITADDLKGYGIIDKVIKEPDGGAQNDITMVANALRENLKKAIEGLSSTGINELLDNRYNKFRQIGKFIENEDN</sequence>
<organism>
    <name type="scientific">Clostridium acetobutylicum (strain ATCC 824 / DSM 792 / JCM 1419 / IAM 19013 / LMG 5710 / NBRC 13948 / NRRL B-527 / VKM B-1787 / 2291 / W)</name>
    <dbReference type="NCBI Taxonomy" id="272562"/>
    <lineage>
        <taxon>Bacteria</taxon>
        <taxon>Bacillati</taxon>
        <taxon>Bacillota</taxon>
        <taxon>Clostridia</taxon>
        <taxon>Eubacteriales</taxon>
        <taxon>Clostridiaceae</taxon>
        <taxon>Clostridium</taxon>
    </lineage>
</organism>
<name>ACCA_CLOAB</name>
<comment type="function">
    <text evidence="1">Component of the acetyl coenzyme A carboxylase (ACC) complex. First, biotin carboxylase catalyzes the carboxylation of biotin on its carrier protein (BCCP) and then the CO(2) group is transferred by the carboxyltransferase to acetyl-CoA to form malonyl-CoA.</text>
</comment>
<comment type="catalytic activity">
    <reaction evidence="1">
        <text>N(6)-carboxybiotinyl-L-lysyl-[protein] + acetyl-CoA = N(6)-biotinyl-L-lysyl-[protein] + malonyl-CoA</text>
        <dbReference type="Rhea" id="RHEA:54728"/>
        <dbReference type="Rhea" id="RHEA-COMP:10505"/>
        <dbReference type="Rhea" id="RHEA-COMP:10506"/>
        <dbReference type="ChEBI" id="CHEBI:57288"/>
        <dbReference type="ChEBI" id="CHEBI:57384"/>
        <dbReference type="ChEBI" id="CHEBI:83144"/>
        <dbReference type="ChEBI" id="CHEBI:83145"/>
        <dbReference type="EC" id="2.1.3.15"/>
    </reaction>
</comment>
<comment type="pathway">
    <text evidence="1">Lipid metabolism; malonyl-CoA biosynthesis; malonyl-CoA from acetyl-CoA: step 1/1.</text>
</comment>
<comment type="subunit">
    <text evidence="1">Acetyl-CoA carboxylase is a heterohexamer composed of biotin carboxyl carrier protein (AccB), biotin carboxylase (AccC) and two subunits each of ACCase subunit alpha (AccA) and ACCase subunit beta (AccD).</text>
</comment>
<comment type="subcellular location">
    <subcellularLocation>
        <location evidence="1">Cytoplasm</location>
    </subcellularLocation>
</comment>
<comment type="similarity">
    <text evidence="1">Belongs to the AccA family.</text>
</comment>